<name>LIAS_PICSI</name>
<organism>
    <name type="scientific">Picea sitchensis</name>
    <name type="common">Sitka spruce</name>
    <name type="synonym">Pinus sitchensis</name>
    <dbReference type="NCBI Taxonomy" id="3332"/>
    <lineage>
        <taxon>Eukaryota</taxon>
        <taxon>Viridiplantae</taxon>
        <taxon>Streptophyta</taxon>
        <taxon>Embryophyta</taxon>
        <taxon>Tracheophyta</taxon>
        <taxon>Spermatophyta</taxon>
        <taxon>Pinopsida</taxon>
        <taxon>Pinidae</taxon>
        <taxon>Conifers I</taxon>
        <taxon>Pinales</taxon>
        <taxon>Pinaceae</taxon>
        <taxon>Picea</taxon>
    </lineage>
</organism>
<protein>
    <recommendedName>
        <fullName evidence="1">Lipoyl synthase, mitochondrial</fullName>
        <ecNumber evidence="1">2.8.1.8</ecNumber>
    </recommendedName>
    <alternativeName>
        <fullName evidence="1">Lipoate synthase</fullName>
        <shortName evidence="1">LS</shortName>
        <shortName evidence="1">Lip-syn</shortName>
    </alternativeName>
    <alternativeName>
        <fullName evidence="1">Lipoic acid synthase</fullName>
    </alternativeName>
</protein>
<dbReference type="EC" id="2.8.1.8" evidence="1"/>
<dbReference type="EMBL" id="EF082836">
    <property type="protein sequence ID" value="ABK22188.1"/>
    <property type="molecule type" value="mRNA"/>
</dbReference>
<dbReference type="SMR" id="A9NNH7"/>
<dbReference type="UniPathway" id="UPA00538">
    <property type="reaction ID" value="UER00593"/>
</dbReference>
<dbReference type="GO" id="GO:0005739">
    <property type="term" value="C:mitochondrion"/>
    <property type="evidence" value="ECO:0007669"/>
    <property type="project" value="UniProtKB-SubCell"/>
</dbReference>
<dbReference type="GO" id="GO:0051539">
    <property type="term" value="F:4 iron, 4 sulfur cluster binding"/>
    <property type="evidence" value="ECO:0007669"/>
    <property type="project" value="UniProtKB-UniRule"/>
</dbReference>
<dbReference type="GO" id="GO:0016992">
    <property type="term" value="F:lipoate synthase activity"/>
    <property type="evidence" value="ECO:0007669"/>
    <property type="project" value="UniProtKB-UniRule"/>
</dbReference>
<dbReference type="GO" id="GO:0046872">
    <property type="term" value="F:metal ion binding"/>
    <property type="evidence" value="ECO:0007669"/>
    <property type="project" value="UniProtKB-KW"/>
</dbReference>
<dbReference type="CDD" id="cd01335">
    <property type="entry name" value="Radical_SAM"/>
    <property type="match status" value="1"/>
</dbReference>
<dbReference type="FunFam" id="3.20.20.70:FF:000125">
    <property type="entry name" value="Lipoyl synthase, mitochondrial"/>
    <property type="match status" value="1"/>
</dbReference>
<dbReference type="Gene3D" id="3.20.20.70">
    <property type="entry name" value="Aldolase class I"/>
    <property type="match status" value="1"/>
</dbReference>
<dbReference type="HAMAP" id="MF_00206">
    <property type="entry name" value="Lipoyl_synth"/>
    <property type="match status" value="1"/>
</dbReference>
<dbReference type="HAMAP" id="MF_03128">
    <property type="entry name" value="Lipoyl_synth_plantM"/>
    <property type="match status" value="1"/>
</dbReference>
<dbReference type="InterPro" id="IPR013785">
    <property type="entry name" value="Aldolase_TIM"/>
</dbReference>
<dbReference type="InterPro" id="IPR006638">
    <property type="entry name" value="Elp3/MiaA/NifB-like_rSAM"/>
</dbReference>
<dbReference type="InterPro" id="IPR031691">
    <property type="entry name" value="LIAS_N"/>
</dbReference>
<dbReference type="InterPro" id="IPR003698">
    <property type="entry name" value="Lipoyl_synth"/>
</dbReference>
<dbReference type="InterPro" id="IPR027527">
    <property type="entry name" value="Lipoyl_synth_mt"/>
</dbReference>
<dbReference type="InterPro" id="IPR007197">
    <property type="entry name" value="rSAM"/>
</dbReference>
<dbReference type="NCBIfam" id="TIGR00510">
    <property type="entry name" value="lipA"/>
    <property type="match status" value="1"/>
</dbReference>
<dbReference type="NCBIfam" id="NF004019">
    <property type="entry name" value="PRK05481.1"/>
    <property type="match status" value="1"/>
</dbReference>
<dbReference type="NCBIfam" id="NF009544">
    <property type="entry name" value="PRK12928.1"/>
    <property type="match status" value="1"/>
</dbReference>
<dbReference type="PANTHER" id="PTHR10949">
    <property type="entry name" value="LIPOYL SYNTHASE"/>
    <property type="match status" value="1"/>
</dbReference>
<dbReference type="PANTHER" id="PTHR10949:SF0">
    <property type="entry name" value="LIPOYL SYNTHASE, MITOCHONDRIAL"/>
    <property type="match status" value="1"/>
</dbReference>
<dbReference type="Pfam" id="PF16881">
    <property type="entry name" value="LIAS_N"/>
    <property type="match status" value="1"/>
</dbReference>
<dbReference type="Pfam" id="PF04055">
    <property type="entry name" value="Radical_SAM"/>
    <property type="match status" value="1"/>
</dbReference>
<dbReference type="SFLD" id="SFLDF00271">
    <property type="entry name" value="lipoyl_synthase"/>
    <property type="match status" value="1"/>
</dbReference>
<dbReference type="SFLD" id="SFLDS00029">
    <property type="entry name" value="Radical_SAM"/>
    <property type="match status" value="1"/>
</dbReference>
<dbReference type="SMART" id="SM00729">
    <property type="entry name" value="Elp3"/>
    <property type="match status" value="1"/>
</dbReference>
<dbReference type="SUPFAM" id="SSF102114">
    <property type="entry name" value="Radical SAM enzymes"/>
    <property type="match status" value="1"/>
</dbReference>
<dbReference type="PROSITE" id="PS51918">
    <property type="entry name" value="RADICAL_SAM"/>
    <property type="match status" value="1"/>
</dbReference>
<comment type="function">
    <text evidence="1">Catalyzes the radical-mediated insertion of two sulfur atoms into the C-6 and C-8 positions of the octanoyl moiety bound to the lipoyl domains of lipoate-dependent enzymes, thereby converting the octanoylated domains into lipoylated derivatives.</text>
</comment>
<comment type="catalytic activity">
    <reaction evidence="1">
        <text>[[Fe-S] cluster scaffold protein carrying a second [4Fe-4S](2+) cluster] + N(6)-octanoyl-L-lysyl-[protein] + 2 oxidized [2Fe-2S]-[ferredoxin] + 2 S-adenosyl-L-methionine + 4 H(+) = [[Fe-S] cluster scaffold protein] + N(6)-[(R)-dihydrolipoyl]-L-lysyl-[protein] + 4 Fe(3+) + 2 hydrogen sulfide + 2 5'-deoxyadenosine + 2 L-methionine + 2 reduced [2Fe-2S]-[ferredoxin]</text>
        <dbReference type="Rhea" id="RHEA:16585"/>
        <dbReference type="Rhea" id="RHEA-COMP:9928"/>
        <dbReference type="Rhea" id="RHEA-COMP:10000"/>
        <dbReference type="Rhea" id="RHEA-COMP:10001"/>
        <dbReference type="Rhea" id="RHEA-COMP:10475"/>
        <dbReference type="Rhea" id="RHEA-COMP:14568"/>
        <dbReference type="Rhea" id="RHEA-COMP:14569"/>
        <dbReference type="ChEBI" id="CHEBI:15378"/>
        <dbReference type="ChEBI" id="CHEBI:17319"/>
        <dbReference type="ChEBI" id="CHEBI:29034"/>
        <dbReference type="ChEBI" id="CHEBI:29919"/>
        <dbReference type="ChEBI" id="CHEBI:33722"/>
        <dbReference type="ChEBI" id="CHEBI:33737"/>
        <dbReference type="ChEBI" id="CHEBI:33738"/>
        <dbReference type="ChEBI" id="CHEBI:57844"/>
        <dbReference type="ChEBI" id="CHEBI:59789"/>
        <dbReference type="ChEBI" id="CHEBI:78809"/>
        <dbReference type="ChEBI" id="CHEBI:83100"/>
        <dbReference type="EC" id="2.8.1.8"/>
    </reaction>
</comment>
<comment type="cofactor">
    <cofactor evidence="1">
        <name>[4Fe-4S] cluster</name>
        <dbReference type="ChEBI" id="CHEBI:49883"/>
    </cofactor>
    <text evidence="1">Binds 2 [4Fe-4S] clusters per subunit. One cluster is coordinated with 3 cysteines and an exchangeable S-adenosyl-L-methionine.</text>
</comment>
<comment type="pathway">
    <text evidence="1">Protein modification; protein lipoylation via endogenous pathway; protein N(6)-(lipoyl)lysine from octanoyl-[acyl-carrier-protein]: step 2/2.</text>
</comment>
<comment type="subcellular location">
    <subcellularLocation>
        <location evidence="1">Mitochondrion</location>
    </subcellularLocation>
</comment>
<comment type="miscellaneous">
    <text evidence="1">This protein may be expected to contain an N-terminal transit peptide but none has been predicted.</text>
</comment>
<comment type="similarity">
    <text evidence="1">Belongs to the radical SAM superfamily. Lipoyl synthase family.</text>
</comment>
<feature type="chain" id="PRO_0000398853" description="Lipoyl synthase, mitochondrial">
    <location>
        <begin position="1"/>
        <end position="386"/>
    </location>
</feature>
<feature type="domain" description="Radical SAM core" evidence="2">
    <location>
        <begin position="131"/>
        <end position="351"/>
    </location>
</feature>
<feature type="binding site" evidence="1">
    <location>
        <position position="115"/>
    </location>
    <ligand>
        <name>[4Fe-4S] cluster</name>
        <dbReference type="ChEBI" id="CHEBI:49883"/>
        <label>1</label>
    </ligand>
</feature>
<feature type="binding site" evidence="1">
    <location>
        <position position="120"/>
    </location>
    <ligand>
        <name>[4Fe-4S] cluster</name>
        <dbReference type="ChEBI" id="CHEBI:49883"/>
        <label>1</label>
    </ligand>
</feature>
<feature type="binding site" evidence="1">
    <location>
        <position position="126"/>
    </location>
    <ligand>
        <name>[4Fe-4S] cluster</name>
        <dbReference type="ChEBI" id="CHEBI:49883"/>
        <label>1</label>
    </ligand>
</feature>
<feature type="binding site" evidence="1">
    <location>
        <position position="146"/>
    </location>
    <ligand>
        <name>[4Fe-4S] cluster</name>
        <dbReference type="ChEBI" id="CHEBI:49883"/>
        <label>2</label>
        <note>4Fe-4S-S-AdoMet</note>
    </ligand>
</feature>
<feature type="binding site" evidence="1">
    <location>
        <position position="150"/>
    </location>
    <ligand>
        <name>[4Fe-4S] cluster</name>
        <dbReference type="ChEBI" id="CHEBI:49883"/>
        <label>2</label>
        <note>4Fe-4S-S-AdoMet</note>
    </ligand>
</feature>
<feature type="binding site" evidence="1">
    <location>
        <position position="153"/>
    </location>
    <ligand>
        <name>[4Fe-4S] cluster</name>
        <dbReference type="ChEBI" id="CHEBI:49883"/>
        <label>2</label>
        <note>4Fe-4S-S-AdoMet</note>
    </ligand>
</feature>
<feature type="binding site" evidence="1">
    <location>
        <position position="362"/>
    </location>
    <ligand>
        <name>[4Fe-4S] cluster</name>
        <dbReference type="ChEBI" id="CHEBI:49883"/>
        <label>1</label>
    </ligand>
</feature>
<sequence>MSINPAFLRRITWGSKSLHHQFTRCQVRALSSSVEQTPESTTPALSALRERLANGGPTLSDFLTRNLGEEPYSVDVGTKKNPLPKPKWMKAAVPGGDKYTAIKAKLREMNLHTVCEEAKCPNLGECWSGGETGTATATIMILGDTCTRGCRFCAVKTSRTPPPPDPNEPTNVAEAIVSWGLDYVVLTSVDRDDLPDQGSGHFAKTVQKLKQLKPKMLVEALVPDFQGNSECVQKVATSGLDVFAHNIETVEELQRVVRDHRANFNQSLEVLKMAKTYSPLGVLTKTSVMLGCGETPAQVIETMEKVREAGVDVITFGQYMRPTKRHMAVSEYVTPEAFEKYQKLGMEMGFRYVASGPMVRSSYKAGEFYIKSMIEDDRKKASSSSI</sequence>
<proteinExistence type="evidence at transcript level"/>
<keyword id="KW-0004">4Fe-4S</keyword>
<keyword id="KW-0408">Iron</keyword>
<keyword id="KW-0411">Iron-sulfur</keyword>
<keyword id="KW-0479">Metal-binding</keyword>
<keyword id="KW-0496">Mitochondrion</keyword>
<keyword id="KW-0949">S-adenosyl-L-methionine</keyword>
<keyword id="KW-0808">Transferase</keyword>
<reference key="1">
    <citation type="journal article" date="2008" name="BMC Genomics">
        <title>A conifer genomics resource of 200,000 spruce (Picea spp.) ESTs and 6,464 high-quality, sequence-finished full-length cDNAs for Sitka spruce (Picea sitchensis).</title>
        <authorList>
            <person name="Ralph S.G."/>
            <person name="Chun H.J.E."/>
            <person name="Kolosova N."/>
            <person name="Cooper D."/>
            <person name="Oddy C."/>
            <person name="Ritland C.E."/>
            <person name="Kirkpatrick R."/>
            <person name="Moore R."/>
            <person name="Barber S."/>
            <person name="Holt R.A."/>
            <person name="Jones S.J.M."/>
            <person name="Marra M.A."/>
            <person name="Douglas C.J."/>
            <person name="Ritland K."/>
            <person name="Bohlmann J."/>
        </authorList>
    </citation>
    <scope>NUCLEOTIDE SEQUENCE [LARGE SCALE GENOMIC DNA]</scope>
</reference>
<evidence type="ECO:0000255" key="1">
    <source>
        <dbReference type="HAMAP-Rule" id="MF_03128"/>
    </source>
</evidence>
<evidence type="ECO:0000255" key="2">
    <source>
        <dbReference type="PROSITE-ProRule" id="PRU01266"/>
    </source>
</evidence>
<accession>A9NNH7</accession>
<gene>
    <name evidence="1" type="primary">LIP1</name>
</gene>